<feature type="signal peptide" evidence="1">
    <location>
        <begin position="1"/>
        <end position="29"/>
    </location>
</feature>
<feature type="chain" id="PRO_1000025486" description="Photosystem II extrinsic protein U">
    <location>
        <begin position="30"/>
        <end position="125"/>
    </location>
</feature>
<reference key="1">
    <citation type="submission" date="2006-05" db="EMBL/GenBank/DDBJ databases">
        <authorList>
            <consortium name="Genoscope"/>
        </authorList>
    </citation>
    <scope>NUCLEOTIDE SEQUENCE [LARGE SCALE GENOMIC DNA]</scope>
    <source>
        <strain>WH7803</strain>
    </source>
</reference>
<comment type="function">
    <text evidence="1">One of the extrinsic, lumenal subunits of photosystem II (PSII). PSII is a light-driven water plastoquinone oxidoreductase, using light energy to abstract electrons from H(2)O, generating a proton gradient subsequently used for ATP formation. The extrinsic proteins stabilize the structure of photosystem II oxygen-evolving complex (OEC), the ion environment of oxygen evolution and protect the OEC against heat-induced inactivation.</text>
</comment>
<comment type="subunit">
    <text evidence="1">PSII is composed of 1 copy each of membrane proteins PsbA, PsbB, PsbC, PsbD, PsbE, PsbF, PsbH, PsbI, PsbJ, PsbK, PsbL, PsbM, PsbT, PsbX, PsbY, PsbZ, Psb30/Ycf12, peripheral proteins PsbO, CyanoQ (PsbQ), PsbU, PsbV and a large number of cofactors. It forms dimeric complexes.</text>
</comment>
<comment type="subcellular location">
    <subcellularLocation>
        <location evidence="1">Cellular thylakoid membrane</location>
        <topology evidence="1">Peripheral membrane protein</topology>
        <orientation evidence="1">Lumenal side</orientation>
    </subcellularLocation>
</comment>
<comment type="similarity">
    <text evidence="1">Belongs to the PsbU family.</text>
</comment>
<keyword id="KW-0249">Electron transport</keyword>
<keyword id="KW-0472">Membrane</keyword>
<keyword id="KW-0602">Photosynthesis</keyword>
<keyword id="KW-0604">Photosystem II</keyword>
<keyword id="KW-1185">Reference proteome</keyword>
<keyword id="KW-0732">Signal</keyword>
<keyword id="KW-0793">Thylakoid</keyword>
<keyword id="KW-0813">Transport</keyword>
<name>PSBU_SYNPW</name>
<proteinExistence type="inferred from homology"/>
<dbReference type="EMBL" id="CT971583">
    <property type="protein sequence ID" value="CAK24629.1"/>
    <property type="molecule type" value="Genomic_DNA"/>
</dbReference>
<dbReference type="SMR" id="A5GNW4"/>
<dbReference type="STRING" id="32051.SynWH7803_2203"/>
<dbReference type="KEGG" id="syx:SynWH7803_2203"/>
<dbReference type="eggNOG" id="COG1555">
    <property type="taxonomic scope" value="Bacteria"/>
</dbReference>
<dbReference type="HOGENOM" id="CLU_141240_1_0_3"/>
<dbReference type="OrthoDB" id="463369at2"/>
<dbReference type="Proteomes" id="UP000001566">
    <property type="component" value="Chromosome"/>
</dbReference>
<dbReference type="GO" id="GO:0019898">
    <property type="term" value="C:extrinsic component of membrane"/>
    <property type="evidence" value="ECO:0007669"/>
    <property type="project" value="InterPro"/>
</dbReference>
<dbReference type="GO" id="GO:0009654">
    <property type="term" value="C:photosystem II oxygen evolving complex"/>
    <property type="evidence" value="ECO:0007669"/>
    <property type="project" value="InterPro"/>
</dbReference>
<dbReference type="GO" id="GO:0031676">
    <property type="term" value="C:plasma membrane-derived thylakoid membrane"/>
    <property type="evidence" value="ECO:0007669"/>
    <property type="project" value="UniProtKB-SubCell"/>
</dbReference>
<dbReference type="GO" id="GO:0015979">
    <property type="term" value="P:photosynthesis"/>
    <property type="evidence" value="ECO:0007669"/>
    <property type="project" value="UniProtKB-UniRule"/>
</dbReference>
<dbReference type="GO" id="GO:0042549">
    <property type="term" value="P:photosystem II stabilization"/>
    <property type="evidence" value="ECO:0007669"/>
    <property type="project" value="InterPro"/>
</dbReference>
<dbReference type="Gene3D" id="1.10.150.320">
    <property type="entry name" value="Photosystem II 12 kDa extrinsic protein"/>
    <property type="match status" value="1"/>
</dbReference>
<dbReference type="HAMAP" id="MF_00589">
    <property type="entry name" value="PSII_PsbU"/>
    <property type="match status" value="1"/>
</dbReference>
<dbReference type="InterPro" id="IPR010527">
    <property type="entry name" value="PSII_PsbU"/>
</dbReference>
<dbReference type="NCBIfam" id="NF002708">
    <property type="entry name" value="PRK02515.1"/>
    <property type="match status" value="1"/>
</dbReference>
<dbReference type="Pfam" id="PF06514">
    <property type="entry name" value="PsbU"/>
    <property type="match status" value="1"/>
</dbReference>
<dbReference type="SUPFAM" id="SSF81585">
    <property type="entry name" value="PsbU/PolX domain-like"/>
    <property type="match status" value="1"/>
</dbReference>
<organism>
    <name type="scientific">Synechococcus sp. (strain WH7803)</name>
    <dbReference type="NCBI Taxonomy" id="32051"/>
    <lineage>
        <taxon>Bacteria</taxon>
        <taxon>Bacillati</taxon>
        <taxon>Cyanobacteriota</taxon>
        <taxon>Cyanophyceae</taxon>
        <taxon>Synechococcales</taxon>
        <taxon>Synechococcaceae</taxon>
        <taxon>Synechococcus</taxon>
    </lineage>
</organism>
<sequence length="125" mass="13898">MKRLLSWLTGLVVMAGLLFSLATPSGVQAADIRNVADDKIAERGDKVDLNNSSVRRFQQFPGMYPTLAGKIVLGGPYESVDDVLALDLTDRQKELFEKYRDNFTVTAPSIALNEGFDRINDGQYR</sequence>
<protein>
    <recommendedName>
        <fullName evidence="1">Photosystem II extrinsic protein U</fullName>
        <shortName evidence="1">PSII-U</shortName>
        <shortName evidence="1">PsbU</shortName>
    </recommendedName>
    <alternativeName>
        <fullName evidence="1">Photosystem II 12 kDa extrinsic protein</fullName>
        <shortName evidence="1">PS II complex 12 kDa extrinsic protein</shortName>
    </alternativeName>
</protein>
<evidence type="ECO:0000255" key="1">
    <source>
        <dbReference type="HAMAP-Rule" id="MF_00589"/>
    </source>
</evidence>
<gene>
    <name evidence="1" type="primary">psbU</name>
    <name type="ordered locus">SynWH7803_2203</name>
</gene>
<accession>A5GNW4</accession>